<proteinExistence type="inferred from homology"/>
<dbReference type="EC" id="2.1.1.195" evidence="1"/>
<dbReference type="EMBL" id="CP000726">
    <property type="protein sequence ID" value="ABS35226.1"/>
    <property type="molecule type" value="Genomic_DNA"/>
</dbReference>
<dbReference type="RefSeq" id="WP_011948621.1">
    <property type="nucleotide sequence ID" value="NC_009697.1"/>
</dbReference>
<dbReference type="SMR" id="A7FSI4"/>
<dbReference type="GeneID" id="5185191"/>
<dbReference type="KEGG" id="cba:CLB_0977"/>
<dbReference type="HOGENOM" id="CLU_041273_1_0_9"/>
<dbReference type="UniPathway" id="UPA00148">
    <property type="reaction ID" value="UER00227"/>
</dbReference>
<dbReference type="GO" id="GO:0043780">
    <property type="term" value="F:cobalt-precorrin-5B C1-methyltransferase activity"/>
    <property type="evidence" value="ECO:0007669"/>
    <property type="project" value="RHEA"/>
</dbReference>
<dbReference type="GO" id="GO:0019251">
    <property type="term" value="P:anaerobic cobalamin biosynthetic process"/>
    <property type="evidence" value="ECO:0007669"/>
    <property type="project" value="UniProtKB-UniRule"/>
</dbReference>
<dbReference type="GO" id="GO:0032259">
    <property type="term" value="P:methylation"/>
    <property type="evidence" value="ECO:0007669"/>
    <property type="project" value="UniProtKB-KW"/>
</dbReference>
<dbReference type="Gene3D" id="3.30.2110.10">
    <property type="entry name" value="CbiD-like"/>
    <property type="match status" value="1"/>
</dbReference>
<dbReference type="HAMAP" id="MF_00787">
    <property type="entry name" value="CbiD"/>
    <property type="match status" value="1"/>
</dbReference>
<dbReference type="InterPro" id="IPR002748">
    <property type="entry name" value="CbiD"/>
</dbReference>
<dbReference type="InterPro" id="IPR036074">
    <property type="entry name" value="CbiD_sf"/>
</dbReference>
<dbReference type="NCBIfam" id="TIGR00312">
    <property type="entry name" value="cbiD"/>
    <property type="match status" value="1"/>
</dbReference>
<dbReference type="PANTHER" id="PTHR35863">
    <property type="entry name" value="COBALT-PRECORRIN-5B C(1)-METHYLTRANSFERASE"/>
    <property type="match status" value="1"/>
</dbReference>
<dbReference type="PANTHER" id="PTHR35863:SF1">
    <property type="entry name" value="COBALT-PRECORRIN-5B C(1)-METHYLTRANSFERASE"/>
    <property type="match status" value="1"/>
</dbReference>
<dbReference type="Pfam" id="PF01888">
    <property type="entry name" value="CbiD"/>
    <property type="match status" value="1"/>
</dbReference>
<dbReference type="PIRSF" id="PIRSF026782">
    <property type="entry name" value="CbiD"/>
    <property type="match status" value="1"/>
</dbReference>
<dbReference type="SUPFAM" id="SSF111342">
    <property type="entry name" value="CbiD-like"/>
    <property type="match status" value="1"/>
</dbReference>
<accession>A7FSI4</accession>
<protein>
    <recommendedName>
        <fullName evidence="1">Cobalt-precorrin-5B C(1)-methyltransferase</fullName>
        <ecNumber evidence="1">2.1.1.195</ecNumber>
    </recommendedName>
    <alternativeName>
        <fullName evidence="1">Cobalt-precorrin-6A synthase</fullName>
    </alternativeName>
</protein>
<keyword id="KW-0169">Cobalamin biosynthesis</keyword>
<keyword id="KW-0489">Methyltransferase</keyword>
<keyword id="KW-0949">S-adenosyl-L-methionine</keyword>
<keyword id="KW-0808">Transferase</keyword>
<comment type="function">
    <text evidence="1">Catalyzes the methylation of C-1 in cobalt-precorrin-5B to form cobalt-precorrin-6A.</text>
</comment>
<comment type="catalytic activity">
    <reaction evidence="1">
        <text>Co-precorrin-5B + S-adenosyl-L-methionine = Co-precorrin-6A + S-adenosyl-L-homocysteine</text>
        <dbReference type="Rhea" id="RHEA:26285"/>
        <dbReference type="ChEBI" id="CHEBI:57856"/>
        <dbReference type="ChEBI" id="CHEBI:59789"/>
        <dbReference type="ChEBI" id="CHEBI:60063"/>
        <dbReference type="ChEBI" id="CHEBI:60064"/>
        <dbReference type="EC" id="2.1.1.195"/>
    </reaction>
</comment>
<comment type="pathway">
    <text evidence="1">Cofactor biosynthesis; adenosylcobalamin biosynthesis; cob(II)yrinate a,c-diamide from sirohydrochlorin (anaerobic route): step 6/10.</text>
</comment>
<comment type="similarity">
    <text evidence="1">Belongs to the CbiD family.</text>
</comment>
<feature type="chain" id="PRO_1000046853" description="Cobalt-precorrin-5B C(1)-methyltransferase">
    <location>
        <begin position="1"/>
        <end position="359"/>
    </location>
</feature>
<gene>
    <name evidence="1" type="primary">cbiD</name>
    <name type="ordered locus">CLB_0977</name>
</gene>
<organism>
    <name type="scientific">Clostridium botulinum (strain ATCC 19397 / Type A)</name>
    <dbReference type="NCBI Taxonomy" id="441770"/>
    <lineage>
        <taxon>Bacteria</taxon>
        <taxon>Bacillati</taxon>
        <taxon>Bacillota</taxon>
        <taxon>Clostridia</taxon>
        <taxon>Eubacteriales</taxon>
        <taxon>Clostridiaceae</taxon>
        <taxon>Clostridium</taxon>
    </lineage>
</organism>
<name>CBID_CLOB1</name>
<reference key="1">
    <citation type="journal article" date="2007" name="PLoS ONE">
        <title>Analysis of the neurotoxin complex genes in Clostridium botulinum A1-A4 and B1 strains: BoNT/A3, /Ba4 and /B1 clusters are located within plasmids.</title>
        <authorList>
            <person name="Smith T.J."/>
            <person name="Hill K.K."/>
            <person name="Foley B.T."/>
            <person name="Detter J.C."/>
            <person name="Munk A.C."/>
            <person name="Bruce D.C."/>
            <person name="Doggett N.A."/>
            <person name="Smith L.A."/>
            <person name="Marks J.D."/>
            <person name="Xie G."/>
            <person name="Brettin T.S."/>
        </authorList>
    </citation>
    <scope>NUCLEOTIDE SEQUENCE [LARGE SCALE GENOMIC DNA]</scope>
    <source>
        <strain>ATCC 19397 / Type A</strain>
    </source>
</reference>
<evidence type="ECO:0000255" key="1">
    <source>
        <dbReference type="HAMAP-Rule" id="MF_00787"/>
    </source>
</evidence>
<sequence length="359" mass="39365">MLDLYVNCDGKKLRCGYTTGSCAAAAAKAAAIALFYNKKLEEINIDTPKGIELAIPIEKIVEDENFVECAVIKDGGDDVDITHGIEIWARAEKKSSGYTLKGGKGVGVVCGEGLYVKKGEPAINPVPCSMIEKEVRSVMPKDSGVEITIFVPKGEEIAKKTFNPRLNIIGGISILGTTGIVMPMSEDALKVSIELEINQKTCHGEKELILLFGNMGEKMAKELNLKEDNMVIMSNYVGFALNCCMARKLEKVTIVGHIGKISKIASGCFNTHSRVCDTRLETLALELALMGYDKDLVTKIYNEKTTEGAVNLLGEGYEKLYKNLGEKIIRKIEQYTYDSIKADIVMYSMEKGILYSSIE</sequence>